<feature type="chain" id="PRO_1000018107" description="Arginine--tRNA ligase">
    <location>
        <begin position="1"/>
        <end position="576"/>
    </location>
</feature>
<feature type="short sequence motif" description="'HIGH' region">
    <location>
        <begin position="126"/>
        <end position="136"/>
    </location>
</feature>
<organism>
    <name type="scientific">Rickettsia rickettsii (strain Sheila Smith)</name>
    <dbReference type="NCBI Taxonomy" id="392021"/>
    <lineage>
        <taxon>Bacteria</taxon>
        <taxon>Pseudomonadati</taxon>
        <taxon>Pseudomonadota</taxon>
        <taxon>Alphaproteobacteria</taxon>
        <taxon>Rickettsiales</taxon>
        <taxon>Rickettsiaceae</taxon>
        <taxon>Rickettsieae</taxon>
        <taxon>Rickettsia</taxon>
        <taxon>spotted fever group</taxon>
    </lineage>
</organism>
<protein>
    <recommendedName>
        <fullName evidence="1">Arginine--tRNA ligase</fullName>
        <ecNumber evidence="1">6.1.1.19</ecNumber>
    </recommendedName>
    <alternativeName>
        <fullName evidence="1">Arginyl-tRNA synthetase</fullName>
        <shortName evidence="1">ArgRS</shortName>
    </alternativeName>
</protein>
<sequence>MNIFNQLKQDIIVASKQLYNNQAIANTATIDIPKDSFNGDLSSNVAMIIAAKESIAPREVALKFKEVLITLPYIASIEIAGPGFINFTIKADSWQASIKDILQHEEKFFEIDIDKSRNINIEYVSANPTGPMHIGHARGAVYGDVLARILQKVSYSVTKEYYVNDAGSQINDLVSTVLLRYKEALGEQITIPAGLYPGEYLIPLGQILAKEYGNKLLTMNYDERFKIIKSFAVEKMLDLNRKDLADLGIKHDIFFSEQSLHDKGEIEETVKLLESMGLIYEGTLPAPKGKIHEEWDNRVQKLFKSTKYGDSQDRPIEKADGSWSYFASDLAYAKDKIERGANHLIYVLGADHSGYVKRIEAIVKALGKEQVKVDVKICQLVNFVENGVPVKMSKRLGSFASVQDVNNEVGKDIIRFMMLTRQNDKPLDFDLVKVKEQSRENPIFYVQYAHVRTISILSKARELMPESYNNFESGKYDLSLLSSEEEIEIIKLLVSWTKTLEASAKYFEPHRIAFYLINLASKFHSMWNFGKENSEYRFVIESNKELTLARLALASAIQKVIASGLEVIGVEPMNKM</sequence>
<reference key="1">
    <citation type="submission" date="2007-09" db="EMBL/GenBank/DDBJ databases">
        <title>Complete genome sequence of Rickettsia rickettsii.</title>
        <authorList>
            <person name="Madan A."/>
            <person name="Fahey J."/>
            <person name="Helton E."/>
            <person name="Ketteman M."/>
            <person name="Madan A."/>
            <person name="Rodrigues S."/>
            <person name="Sanchez A."/>
            <person name="Dasch G."/>
            <person name="Eremeeva M."/>
        </authorList>
    </citation>
    <scope>NUCLEOTIDE SEQUENCE [LARGE SCALE GENOMIC DNA]</scope>
    <source>
        <strain>Sheila Smith</strain>
    </source>
</reference>
<comment type="catalytic activity">
    <reaction evidence="1">
        <text>tRNA(Arg) + L-arginine + ATP = L-arginyl-tRNA(Arg) + AMP + diphosphate</text>
        <dbReference type="Rhea" id="RHEA:20301"/>
        <dbReference type="Rhea" id="RHEA-COMP:9658"/>
        <dbReference type="Rhea" id="RHEA-COMP:9673"/>
        <dbReference type="ChEBI" id="CHEBI:30616"/>
        <dbReference type="ChEBI" id="CHEBI:32682"/>
        <dbReference type="ChEBI" id="CHEBI:33019"/>
        <dbReference type="ChEBI" id="CHEBI:78442"/>
        <dbReference type="ChEBI" id="CHEBI:78513"/>
        <dbReference type="ChEBI" id="CHEBI:456215"/>
        <dbReference type="EC" id="6.1.1.19"/>
    </reaction>
</comment>
<comment type="subunit">
    <text evidence="1">Monomer.</text>
</comment>
<comment type="subcellular location">
    <subcellularLocation>
        <location evidence="1">Cytoplasm</location>
    </subcellularLocation>
</comment>
<comment type="similarity">
    <text evidence="1">Belongs to the class-I aminoacyl-tRNA synthetase family.</text>
</comment>
<accession>A8GQM8</accession>
<evidence type="ECO:0000255" key="1">
    <source>
        <dbReference type="HAMAP-Rule" id="MF_00123"/>
    </source>
</evidence>
<gene>
    <name evidence="1" type="primary">argS</name>
    <name type="ordered locus">A1G_00585</name>
</gene>
<name>SYR_RICRS</name>
<proteinExistence type="inferred from homology"/>
<dbReference type="EC" id="6.1.1.19" evidence="1"/>
<dbReference type="EMBL" id="CP000848">
    <property type="protein sequence ID" value="ABV75703.1"/>
    <property type="molecule type" value="Genomic_DNA"/>
</dbReference>
<dbReference type="RefSeq" id="WP_012150320.1">
    <property type="nucleotide sequence ID" value="NZ_CP121767.1"/>
</dbReference>
<dbReference type="SMR" id="A8GQM8"/>
<dbReference type="GeneID" id="79936894"/>
<dbReference type="KEGG" id="rri:A1G_00585"/>
<dbReference type="HOGENOM" id="CLU_006406_0_1_5"/>
<dbReference type="Proteomes" id="UP000006832">
    <property type="component" value="Chromosome"/>
</dbReference>
<dbReference type="GO" id="GO:0005737">
    <property type="term" value="C:cytoplasm"/>
    <property type="evidence" value="ECO:0007669"/>
    <property type="project" value="UniProtKB-SubCell"/>
</dbReference>
<dbReference type="GO" id="GO:0004814">
    <property type="term" value="F:arginine-tRNA ligase activity"/>
    <property type="evidence" value="ECO:0007669"/>
    <property type="project" value="UniProtKB-UniRule"/>
</dbReference>
<dbReference type="GO" id="GO:0005524">
    <property type="term" value="F:ATP binding"/>
    <property type="evidence" value="ECO:0007669"/>
    <property type="project" value="UniProtKB-UniRule"/>
</dbReference>
<dbReference type="GO" id="GO:0006420">
    <property type="term" value="P:arginyl-tRNA aminoacylation"/>
    <property type="evidence" value="ECO:0007669"/>
    <property type="project" value="UniProtKB-UniRule"/>
</dbReference>
<dbReference type="CDD" id="cd00671">
    <property type="entry name" value="ArgRS_core"/>
    <property type="match status" value="1"/>
</dbReference>
<dbReference type="Gene3D" id="3.30.1360.70">
    <property type="entry name" value="Arginyl tRNA synthetase N-terminal domain"/>
    <property type="match status" value="1"/>
</dbReference>
<dbReference type="Gene3D" id="3.40.50.620">
    <property type="entry name" value="HUPs"/>
    <property type="match status" value="1"/>
</dbReference>
<dbReference type="Gene3D" id="1.10.730.10">
    <property type="entry name" value="Isoleucyl-tRNA Synthetase, Domain 1"/>
    <property type="match status" value="1"/>
</dbReference>
<dbReference type="HAMAP" id="MF_00123">
    <property type="entry name" value="Arg_tRNA_synth"/>
    <property type="match status" value="1"/>
</dbReference>
<dbReference type="InterPro" id="IPR001412">
    <property type="entry name" value="aa-tRNA-synth_I_CS"/>
</dbReference>
<dbReference type="InterPro" id="IPR001278">
    <property type="entry name" value="Arg-tRNA-ligase"/>
</dbReference>
<dbReference type="InterPro" id="IPR005148">
    <property type="entry name" value="Arg-tRNA-synth_N"/>
</dbReference>
<dbReference type="InterPro" id="IPR036695">
    <property type="entry name" value="Arg-tRNA-synth_N_sf"/>
</dbReference>
<dbReference type="InterPro" id="IPR035684">
    <property type="entry name" value="ArgRS_core"/>
</dbReference>
<dbReference type="InterPro" id="IPR008909">
    <property type="entry name" value="DALR_anticod-bd"/>
</dbReference>
<dbReference type="InterPro" id="IPR014729">
    <property type="entry name" value="Rossmann-like_a/b/a_fold"/>
</dbReference>
<dbReference type="InterPro" id="IPR009080">
    <property type="entry name" value="tRNAsynth_Ia_anticodon-bd"/>
</dbReference>
<dbReference type="NCBIfam" id="TIGR00456">
    <property type="entry name" value="argS"/>
    <property type="match status" value="1"/>
</dbReference>
<dbReference type="PANTHER" id="PTHR11956:SF5">
    <property type="entry name" value="ARGININE--TRNA LIGASE, CYTOPLASMIC"/>
    <property type="match status" value="1"/>
</dbReference>
<dbReference type="PANTHER" id="PTHR11956">
    <property type="entry name" value="ARGINYL-TRNA SYNTHETASE"/>
    <property type="match status" value="1"/>
</dbReference>
<dbReference type="Pfam" id="PF03485">
    <property type="entry name" value="Arg_tRNA_synt_N"/>
    <property type="match status" value="1"/>
</dbReference>
<dbReference type="Pfam" id="PF05746">
    <property type="entry name" value="DALR_1"/>
    <property type="match status" value="1"/>
</dbReference>
<dbReference type="Pfam" id="PF00750">
    <property type="entry name" value="tRNA-synt_1d"/>
    <property type="match status" value="1"/>
</dbReference>
<dbReference type="PRINTS" id="PR01038">
    <property type="entry name" value="TRNASYNTHARG"/>
</dbReference>
<dbReference type="SMART" id="SM01016">
    <property type="entry name" value="Arg_tRNA_synt_N"/>
    <property type="match status" value="1"/>
</dbReference>
<dbReference type="SMART" id="SM00836">
    <property type="entry name" value="DALR_1"/>
    <property type="match status" value="1"/>
</dbReference>
<dbReference type="SUPFAM" id="SSF47323">
    <property type="entry name" value="Anticodon-binding domain of a subclass of class I aminoacyl-tRNA synthetases"/>
    <property type="match status" value="1"/>
</dbReference>
<dbReference type="SUPFAM" id="SSF55190">
    <property type="entry name" value="Arginyl-tRNA synthetase (ArgRS), N-terminal 'additional' domain"/>
    <property type="match status" value="1"/>
</dbReference>
<dbReference type="SUPFAM" id="SSF52374">
    <property type="entry name" value="Nucleotidylyl transferase"/>
    <property type="match status" value="1"/>
</dbReference>
<dbReference type="PROSITE" id="PS00178">
    <property type="entry name" value="AA_TRNA_LIGASE_I"/>
    <property type="match status" value="1"/>
</dbReference>
<keyword id="KW-0030">Aminoacyl-tRNA synthetase</keyword>
<keyword id="KW-0067">ATP-binding</keyword>
<keyword id="KW-0963">Cytoplasm</keyword>
<keyword id="KW-0436">Ligase</keyword>
<keyword id="KW-0547">Nucleotide-binding</keyword>
<keyword id="KW-0648">Protein biosynthesis</keyword>